<organism evidence="7">
    <name type="scientific">Arabidopsis thaliana</name>
    <name type="common">Mouse-ear cress</name>
    <dbReference type="NCBI Taxonomy" id="3702"/>
    <lineage>
        <taxon>Eukaryota</taxon>
        <taxon>Viridiplantae</taxon>
        <taxon>Streptophyta</taxon>
        <taxon>Embryophyta</taxon>
        <taxon>Tracheophyta</taxon>
        <taxon>Spermatophyta</taxon>
        <taxon>Magnoliopsida</taxon>
        <taxon>eudicotyledons</taxon>
        <taxon>Gunneridae</taxon>
        <taxon>Pentapetalae</taxon>
        <taxon>rosids</taxon>
        <taxon>malvids</taxon>
        <taxon>Brassicales</taxon>
        <taxon>Brassicaceae</taxon>
        <taxon>Camelineae</taxon>
        <taxon>Arabidopsis</taxon>
    </lineage>
</organism>
<proteinExistence type="evidence at transcript level"/>
<reference key="1">
    <citation type="journal article" date="2000" name="Nature">
        <title>Sequence and analysis of chromosome 1 of the plant Arabidopsis thaliana.</title>
        <authorList>
            <person name="Theologis A."/>
            <person name="Ecker J.R."/>
            <person name="Palm C.J."/>
            <person name="Federspiel N.A."/>
            <person name="Kaul S."/>
            <person name="White O."/>
            <person name="Alonso J."/>
            <person name="Altafi H."/>
            <person name="Araujo R."/>
            <person name="Bowman C.L."/>
            <person name="Brooks S.Y."/>
            <person name="Buehler E."/>
            <person name="Chan A."/>
            <person name="Chao Q."/>
            <person name="Chen H."/>
            <person name="Cheuk R.F."/>
            <person name="Chin C.W."/>
            <person name="Chung M.K."/>
            <person name="Conn L."/>
            <person name="Conway A.B."/>
            <person name="Conway A.R."/>
            <person name="Creasy T.H."/>
            <person name="Dewar K."/>
            <person name="Dunn P."/>
            <person name="Etgu P."/>
            <person name="Feldblyum T.V."/>
            <person name="Feng J.-D."/>
            <person name="Fong B."/>
            <person name="Fujii C.Y."/>
            <person name="Gill J.E."/>
            <person name="Goldsmith A.D."/>
            <person name="Haas B."/>
            <person name="Hansen N.F."/>
            <person name="Hughes B."/>
            <person name="Huizar L."/>
            <person name="Hunter J.L."/>
            <person name="Jenkins J."/>
            <person name="Johnson-Hopson C."/>
            <person name="Khan S."/>
            <person name="Khaykin E."/>
            <person name="Kim C.J."/>
            <person name="Koo H.L."/>
            <person name="Kremenetskaia I."/>
            <person name="Kurtz D.B."/>
            <person name="Kwan A."/>
            <person name="Lam B."/>
            <person name="Langin-Hooper S."/>
            <person name="Lee A."/>
            <person name="Lee J.M."/>
            <person name="Lenz C.A."/>
            <person name="Li J.H."/>
            <person name="Li Y.-P."/>
            <person name="Lin X."/>
            <person name="Liu S.X."/>
            <person name="Liu Z.A."/>
            <person name="Luros J.S."/>
            <person name="Maiti R."/>
            <person name="Marziali A."/>
            <person name="Militscher J."/>
            <person name="Miranda M."/>
            <person name="Nguyen M."/>
            <person name="Nierman W.C."/>
            <person name="Osborne B.I."/>
            <person name="Pai G."/>
            <person name="Peterson J."/>
            <person name="Pham P.K."/>
            <person name="Rizzo M."/>
            <person name="Rooney T."/>
            <person name="Rowley D."/>
            <person name="Sakano H."/>
            <person name="Salzberg S.L."/>
            <person name="Schwartz J.R."/>
            <person name="Shinn P."/>
            <person name="Southwick A.M."/>
            <person name="Sun H."/>
            <person name="Tallon L.J."/>
            <person name="Tambunga G."/>
            <person name="Toriumi M.J."/>
            <person name="Town C.D."/>
            <person name="Utterback T."/>
            <person name="Van Aken S."/>
            <person name="Vaysberg M."/>
            <person name="Vysotskaia V.S."/>
            <person name="Walker M."/>
            <person name="Wu D."/>
            <person name="Yu G."/>
            <person name="Fraser C.M."/>
            <person name="Venter J.C."/>
            <person name="Davis R.W."/>
        </authorList>
    </citation>
    <scope>NUCLEOTIDE SEQUENCE [LARGE SCALE GENOMIC DNA]</scope>
    <source>
        <strain>cv. Columbia</strain>
    </source>
</reference>
<reference key="2">
    <citation type="journal article" date="2017" name="Plant J.">
        <title>Araport11: a complete reannotation of the Arabidopsis thaliana reference genome.</title>
        <authorList>
            <person name="Cheng C.Y."/>
            <person name="Krishnakumar V."/>
            <person name="Chan A.P."/>
            <person name="Thibaud-Nissen F."/>
            <person name="Schobel S."/>
            <person name="Town C.D."/>
        </authorList>
    </citation>
    <scope>GENOME REANNOTATION</scope>
    <source>
        <strain>cv. Columbia</strain>
    </source>
</reference>
<reference key="3">
    <citation type="journal article" date="2003" name="Science">
        <title>Empirical analysis of transcriptional activity in the Arabidopsis genome.</title>
        <authorList>
            <person name="Yamada K."/>
            <person name="Lim J."/>
            <person name="Dale J.M."/>
            <person name="Chen H."/>
            <person name="Shinn P."/>
            <person name="Palm C.J."/>
            <person name="Southwick A.M."/>
            <person name="Wu H.C."/>
            <person name="Kim C.J."/>
            <person name="Nguyen M."/>
            <person name="Pham P.K."/>
            <person name="Cheuk R.F."/>
            <person name="Karlin-Newmann G."/>
            <person name="Liu S.X."/>
            <person name="Lam B."/>
            <person name="Sakano H."/>
            <person name="Wu T."/>
            <person name="Yu G."/>
            <person name="Miranda M."/>
            <person name="Quach H.L."/>
            <person name="Tripp M."/>
            <person name="Chang C.H."/>
            <person name="Lee J.M."/>
            <person name="Toriumi M.J."/>
            <person name="Chan M.M."/>
            <person name="Tang C.C."/>
            <person name="Onodera C.S."/>
            <person name="Deng J.M."/>
            <person name="Akiyama K."/>
            <person name="Ansari Y."/>
            <person name="Arakawa T."/>
            <person name="Banh J."/>
            <person name="Banno F."/>
            <person name="Bowser L."/>
            <person name="Brooks S.Y."/>
            <person name="Carninci P."/>
            <person name="Chao Q."/>
            <person name="Choy N."/>
            <person name="Enju A."/>
            <person name="Goldsmith A.D."/>
            <person name="Gurjal M."/>
            <person name="Hansen N.F."/>
            <person name="Hayashizaki Y."/>
            <person name="Johnson-Hopson C."/>
            <person name="Hsuan V.W."/>
            <person name="Iida K."/>
            <person name="Karnes M."/>
            <person name="Khan S."/>
            <person name="Koesema E."/>
            <person name="Ishida J."/>
            <person name="Jiang P.X."/>
            <person name="Jones T."/>
            <person name="Kawai J."/>
            <person name="Kamiya A."/>
            <person name="Meyers C."/>
            <person name="Nakajima M."/>
            <person name="Narusaka M."/>
            <person name="Seki M."/>
            <person name="Sakurai T."/>
            <person name="Satou M."/>
            <person name="Tamse R."/>
            <person name="Vaysberg M."/>
            <person name="Wallender E.K."/>
            <person name="Wong C."/>
            <person name="Yamamura Y."/>
            <person name="Yuan S."/>
            <person name="Shinozaki K."/>
            <person name="Davis R.W."/>
            <person name="Theologis A."/>
            <person name="Ecker J.R."/>
        </authorList>
    </citation>
    <scope>NUCLEOTIDE SEQUENCE [LARGE SCALE MRNA]</scope>
    <source>
        <strain>cv. Columbia</strain>
    </source>
</reference>
<reference key="4">
    <citation type="submission" date="2004-09" db="EMBL/GenBank/DDBJ databases">
        <title>Large-scale analysis of RIKEN Arabidopsis full-length (RAFL) cDNAs.</title>
        <authorList>
            <person name="Totoki Y."/>
            <person name="Seki M."/>
            <person name="Ishida J."/>
            <person name="Nakajima M."/>
            <person name="Enju A."/>
            <person name="Kamiya A."/>
            <person name="Narusaka M."/>
            <person name="Shin-i T."/>
            <person name="Nakagawa M."/>
            <person name="Sakamoto N."/>
            <person name="Oishi K."/>
            <person name="Kohara Y."/>
            <person name="Kobayashi M."/>
            <person name="Toyoda A."/>
            <person name="Sakaki Y."/>
            <person name="Sakurai T."/>
            <person name="Iida K."/>
            <person name="Akiyama K."/>
            <person name="Satou M."/>
            <person name="Toyoda T."/>
            <person name="Konagaya A."/>
            <person name="Carninci P."/>
            <person name="Kawai J."/>
            <person name="Hayashizaki Y."/>
            <person name="Shinozaki K."/>
        </authorList>
    </citation>
    <scope>NUCLEOTIDE SEQUENCE [LARGE SCALE MRNA]</scope>
    <source>
        <strain>cv. Columbia</strain>
    </source>
</reference>
<reference key="5">
    <citation type="journal article" date="2012" name="FEBS Lett.">
        <title>Cdi gene is required for pollen germination and tube growth in Arabidopsis.</title>
        <authorList>
            <person name="Li H.-M."/>
            <person name="Chen H."/>
            <person name="Yang Z.-N."/>
            <person name="Gong J.-M."/>
        </authorList>
    </citation>
    <scope>FUNCTION</scope>
    <scope>DISRUPTION PHENOTYPE</scope>
    <scope>TISSUE SPECIFICITY</scope>
    <scope>SUBCELLULAR LOCATION</scope>
</reference>
<evidence type="ECO:0000255" key="1"/>
<evidence type="ECO:0000269" key="2">
    <source>
    </source>
</evidence>
<evidence type="ECO:0000303" key="3">
    <source>
    </source>
</evidence>
<evidence type="ECO:0000305" key="4"/>
<evidence type="ECO:0000312" key="5">
    <source>
        <dbReference type="Araport" id="AT1G64980"/>
    </source>
</evidence>
<evidence type="ECO:0000312" key="6">
    <source>
        <dbReference type="EMBL" id="AAD38274.1"/>
    </source>
</evidence>
<evidence type="ECO:0000312" key="7">
    <source>
        <dbReference type="Proteomes" id="UP000006548"/>
    </source>
</evidence>
<dbReference type="EMBL" id="AC006193">
    <property type="protein sequence ID" value="AAD38274.1"/>
    <property type="molecule type" value="Genomic_DNA"/>
</dbReference>
<dbReference type="EMBL" id="CP002684">
    <property type="protein sequence ID" value="AEE34311.1"/>
    <property type="molecule type" value="Genomic_DNA"/>
</dbReference>
<dbReference type="EMBL" id="CP002684">
    <property type="protein sequence ID" value="ANM59158.1"/>
    <property type="molecule type" value="Genomic_DNA"/>
</dbReference>
<dbReference type="EMBL" id="BT010414">
    <property type="protein sequence ID" value="AAQ62415.1"/>
    <property type="molecule type" value="mRNA"/>
</dbReference>
<dbReference type="EMBL" id="AK176271">
    <property type="protein sequence ID" value="BAD44034.1"/>
    <property type="molecule type" value="mRNA"/>
</dbReference>
<dbReference type="PIR" id="D96673">
    <property type="entry name" value="D96673"/>
</dbReference>
<dbReference type="RefSeq" id="NP_001321542.1">
    <property type="nucleotide sequence ID" value="NM_001334184.1"/>
</dbReference>
<dbReference type="RefSeq" id="NP_176678.1">
    <property type="nucleotide sequence ID" value="NM_105172.4"/>
</dbReference>
<dbReference type="FunCoup" id="Q9XIP8">
    <property type="interactions" value="996"/>
</dbReference>
<dbReference type="STRING" id="3702.Q9XIP8"/>
<dbReference type="MetOSite" id="Q9XIP8"/>
<dbReference type="PaxDb" id="3702-AT1G64980.1"/>
<dbReference type="ProteomicsDB" id="223973"/>
<dbReference type="DNASU" id="842806"/>
<dbReference type="EnsemblPlants" id="AT1G64980.1">
    <property type="protein sequence ID" value="AT1G64980.1"/>
    <property type="gene ID" value="AT1G64980"/>
</dbReference>
<dbReference type="EnsemblPlants" id="AT1G64980.3">
    <property type="protein sequence ID" value="AT1G64980.3"/>
    <property type="gene ID" value="AT1G64980"/>
</dbReference>
<dbReference type="GeneID" id="842806"/>
<dbReference type="Gramene" id="AT1G64980.1">
    <property type="protein sequence ID" value="AT1G64980.1"/>
    <property type="gene ID" value="AT1G64980"/>
</dbReference>
<dbReference type="Gramene" id="AT1G64980.3">
    <property type="protein sequence ID" value="AT1G64980.3"/>
    <property type="gene ID" value="AT1G64980"/>
</dbReference>
<dbReference type="KEGG" id="ath:AT1G64980"/>
<dbReference type="Araport" id="AT1G64980"/>
<dbReference type="TAIR" id="AT1G64980">
    <property type="gene designation" value="CDI"/>
</dbReference>
<dbReference type="eggNOG" id="ENOG502QPHU">
    <property type="taxonomic scope" value="Eukaryota"/>
</dbReference>
<dbReference type="HOGENOM" id="CLU_1039721_0_0_1"/>
<dbReference type="InParanoid" id="Q9XIP8"/>
<dbReference type="OMA" id="FMDCDML"/>
<dbReference type="PhylomeDB" id="Q9XIP8"/>
<dbReference type="PRO" id="PR:Q9XIP8"/>
<dbReference type="Proteomes" id="UP000006548">
    <property type="component" value="Chromosome 1"/>
</dbReference>
<dbReference type="ExpressionAtlas" id="Q9XIP8">
    <property type="expression patterns" value="baseline and differential"/>
</dbReference>
<dbReference type="GO" id="GO:0005829">
    <property type="term" value="C:cytosol"/>
    <property type="evidence" value="ECO:0000314"/>
    <property type="project" value="TAIR"/>
</dbReference>
<dbReference type="GO" id="GO:0016740">
    <property type="term" value="F:transferase activity"/>
    <property type="evidence" value="ECO:0007669"/>
    <property type="project" value="UniProtKB-KW"/>
</dbReference>
<dbReference type="GO" id="GO:0009846">
    <property type="term" value="P:pollen germination"/>
    <property type="evidence" value="ECO:0000315"/>
    <property type="project" value="TAIR"/>
</dbReference>
<dbReference type="GO" id="GO:0009860">
    <property type="term" value="P:pollen tube growth"/>
    <property type="evidence" value="ECO:0000315"/>
    <property type="project" value="TAIR"/>
</dbReference>
<dbReference type="FunFam" id="3.90.550.10:FF:000290">
    <property type="entry name" value="Protein CDI"/>
    <property type="match status" value="1"/>
</dbReference>
<dbReference type="Gene3D" id="3.90.550.10">
    <property type="entry name" value="Spore Coat Polysaccharide Biosynthesis Protein SpsA, Chain A"/>
    <property type="match status" value="1"/>
</dbReference>
<dbReference type="InterPro" id="IPR029044">
    <property type="entry name" value="Nucleotide-diphossugar_trans"/>
</dbReference>
<dbReference type="PANTHER" id="PTHR35105">
    <property type="entry name" value="EXPRESSED PROTEIN"/>
    <property type="match status" value="1"/>
</dbReference>
<dbReference type="PANTHER" id="PTHR35105:SF2">
    <property type="entry name" value="PROTEIN CDI"/>
    <property type="match status" value="1"/>
</dbReference>
<dbReference type="SUPFAM" id="SSF53448">
    <property type="entry name" value="Nucleotide-diphospho-sugar transferases"/>
    <property type="match status" value="1"/>
</dbReference>
<sequence>MTISNGDVKSETCNNGSSEKKPFRIFVGYDPREDLAYQVCHHSITKRSSIPVEITPIIQSDLRKKGLYWRERGQLESTEFSFSRFLTPHLSDYQGWAMFVDCDFLYLADIKELTDLIDDKYAIMCVQHDYTPKETTKMDGAVQTVYPRKNWSSMVLYNCGHPKNKTLSPEIVNTQTGAFLHRFQWLEDEEIGSIPFVWNFLEGHNRVVEKDPTTQPKAVHYTRGGPWFDAWKDCEFADLWLNEMEEYNKENKKEADNAK</sequence>
<feature type="chain" id="PRO_0000431804" description="Protein CDI">
    <location>
        <begin position="1"/>
        <end position="259"/>
    </location>
</feature>
<feature type="coiled-coil region" evidence="1">
    <location>
        <begin position="236"/>
        <end position="259"/>
    </location>
</feature>
<name>CDI_ARATH</name>
<gene>
    <name evidence="3" type="primary">CDI</name>
    <name evidence="5" type="ordered locus">At1g64980</name>
    <name evidence="6" type="ORF">F13O11.28</name>
</gene>
<keyword id="KW-0175">Coiled coil</keyword>
<keyword id="KW-0963">Cytoplasm</keyword>
<keyword id="KW-0278">Fertilization</keyword>
<keyword id="KW-0309">Germination</keyword>
<keyword id="KW-1185">Reference proteome</keyword>
<keyword id="KW-0808">Transferase</keyword>
<protein>
    <recommendedName>
        <fullName evidence="4">Protein CDI</fullName>
    </recommendedName>
    <alternativeName>
        <fullName evidence="3">Protein CADMIUM INDUCED</fullName>
    </alternativeName>
</protein>
<comment type="function">
    <text evidence="2">Probable nucleotide-diphospho-sugar transferase required for pollen germination and tube growth.</text>
</comment>
<comment type="subcellular location">
    <subcellularLocation>
        <location evidence="2">Cytoplasm</location>
        <location evidence="2">Cytosol</location>
    </subcellularLocation>
</comment>
<comment type="tissue specificity">
    <text evidence="2">Mostly expressed in pollen grains and pollen tubes, and, at low levels, in seedlings, roots, stems, leaves, flowers and siliques.</text>
</comment>
<comment type="disruption phenotype">
    <text evidence="2">Impaired pollen germination and pollen tube growth thus leading to disrupted male transmission.</text>
</comment>
<accession>Q9XIP8</accession>